<name>GBLP_SCHPO</name>
<protein>
    <recommendedName>
        <fullName evidence="8">Small ribosomal subunit protein RACK1</fullName>
    </recommendedName>
    <alternativeName>
        <fullName>Guanine nucleotide-binding protein subunit beta-like protein</fullName>
    </alternativeName>
    <alternativeName>
        <fullName>Receptor of activated protein kinase C</fullName>
    </alternativeName>
</protein>
<proteinExistence type="evidence at protein level"/>
<keyword id="KW-0002">3D-structure</keyword>
<keyword id="KW-0963">Cytoplasm</keyword>
<keyword id="KW-0472">Membrane</keyword>
<keyword id="KW-0597">Phosphoprotein</keyword>
<keyword id="KW-1185">Reference proteome</keyword>
<keyword id="KW-0677">Repeat</keyword>
<keyword id="KW-0687">Ribonucleoprotein</keyword>
<keyword id="KW-0689">Ribosomal protein</keyword>
<keyword id="KW-0853">WD repeat</keyword>
<organism>
    <name type="scientific">Schizosaccharomyces pombe (strain 972 / ATCC 24843)</name>
    <name type="common">Fission yeast</name>
    <dbReference type="NCBI Taxonomy" id="284812"/>
    <lineage>
        <taxon>Eukaryota</taxon>
        <taxon>Fungi</taxon>
        <taxon>Dikarya</taxon>
        <taxon>Ascomycota</taxon>
        <taxon>Taphrinomycotina</taxon>
        <taxon>Schizosaccharomycetes</taxon>
        <taxon>Schizosaccharomycetales</taxon>
        <taxon>Schizosaccharomycetaceae</taxon>
        <taxon>Schizosaccharomyces</taxon>
    </lineage>
</organism>
<reference key="1">
    <citation type="journal article" date="1995" name="J. Microbiol.">
        <title>Molecular cloning and nucleotide sequence of Schizosaccharomyces pombe homologue of the receptor for activated protein kinase C gene.</title>
        <authorList>
            <person name="Park S.-K."/>
            <person name="Yoo H.-S."/>
        </authorList>
    </citation>
    <scope>NUCLEOTIDE SEQUENCE [MRNA]</scope>
    <source>
        <strain>ED616</strain>
    </source>
</reference>
<reference key="2">
    <citation type="journal article" date="2001" name="Biochem. Biophys. Res. Commun.">
        <title>Rkp1/Cpc2, a fission yeast RACK1 homolog, is involved in actin cytoskeleton organization through protein kinase C, Pck2, signaling.</title>
        <authorList>
            <person name="Won M."/>
            <person name="Park S.-K."/>
            <person name="Hoe K.-L."/>
            <person name="Jang Y.-J."/>
            <person name="Chung K.-S."/>
            <person name="Kim D.-U."/>
            <person name="Kim H.-B."/>
            <person name="Yoo H.-S."/>
        </authorList>
    </citation>
    <scope>NUCLEOTIDE SEQUENCE [GENOMIC DNA]</scope>
    <scope>FUNCTION</scope>
    <scope>SUBCELLULAR LOCATION</scope>
    <source>
        <strain>ED616</strain>
    </source>
</reference>
<reference key="3">
    <citation type="journal article" date="2001" name="Biochem. Biophys. Res. Commun.">
        <authorList>
            <person name="Won M."/>
            <person name="Park S.-K."/>
            <person name="Hoe K.-L."/>
            <person name="Jang Y.-J."/>
            <person name="Chung K.-S."/>
            <person name="Kim D.-U."/>
            <person name="Kim H.-B."/>
            <person name="Yoo H.-S."/>
        </authorList>
    </citation>
    <scope>ERRATUM OF PUBMED:11263963</scope>
</reference>
<reference key="4">
    <citation type="journal article" date="2002" name="Nature">
        <title>The genome sequence of Schizosaccharomyces pombe.</title>
        <authorList>
            <person name="Wood V."/>
            <person name="Gwilliam R."/>
            <person name="Rajandream M.A."/>
            <person name="Lyne M.H."/>
            <person name="Lyne R."/>
            <person name="Stewart A."/>
            <person name="Sgouros J.G."/>
            <person name="Peat N."/>
            <person name="Hayles J."/>
            <person name="Baker S.G."/>
            <person name="Basham D."/>
            <person name="Bowman S."/>
            <person name="Brooks K."/>
            <person name="Brown D."/>
            <person name="Brown S."/>
            <person name="Chillingworth T."/>
            <person name="Churcher C.M."/>
            <person name="Collins M."/>
            <person name="Connor R."/>
            <person name="Cronin A."/>
            <person name="Davis P."/>
            <person name="Feltwell T."/>
            <person name="Fraser A."/>
            <person name="Gentles S."/>
            <person name="Goble A."/>
            <person name="Hamlin N."/>
            <person name="Harris D.E."/>
            <person name="Hidalgo J."/>
            <person name="Hodgson G."/>
            <person name="Holroyd S."/>
            <person name="Hornsby T."/>
            <person name="Howarth S."/>
            <person name="Huckle E.J."/>
            <person name="Hunt S."/>
            <person name="Jagels K."/>
            <person name="James K.D."/>
            <person name="Jones L."/>
            <person name="Jones M."/>
            <person name="Leather S."/>
            <person name="McDonald S."/>
            <person name="McLean J."/>
            <person name="Mooney P."/>
            <person name="Moule S."/>
            <person name="Mungall K.L."/>
            <person name="Murphy L.D."/>
            <person name="Niblett D."/>
            <person name="Odell C."/>
            <person name="Oliver K."/>
            <person name="O'Neil S."/>
            <person name="Pearson D."/>
            <person name="Quail M.A."/>
            <person name="Rabbinowitsch E."/>
            <person name="Rutherford K.M."/>
            <person name="Rutter S."/>
            <person name="Saunders D."/>
            <person name="Seeger K."/>
            <person name="Sharp S."/>
            <person name="Skelton J."/>
            <person name="Simmonds M.N."/>
            <person name="Squares R."/>
            <person name="Squares S."/>
            <person name="Stevens K."/>
            <person name="Taylor K."/>
            <person name="Taylor R.G."/>
            <person name="Tivey A."/>
            <person name="Walsh S.V."/>
            <person name="Warren T."/>
            <person name="Whitehead S."/>
            <person name="Woodward J.R."/>
            <person name="Volckaert G."/>
            <person name="Aert R."/>
            <person name="Robben J."/>
            <person name="Grymonprez B."/>
            <person name="Weltjens I."/>
            <person name="Vanstreels E."/>
            <person name="Rieger M."/>
            <person name="Schaefer M."/>
            <person name="Mueller-Auer S."/>
            <person name="Gabel C."/>
            <person name="Fuchs M."/>
            <person name="Duesterhoeft A."/>
            <person name="Fritzc C."/>
            <person name="Holzer E."/>
            <person name="Moestl D."/>
            <person name="Hilbert H."/>
            <person name="Borzym K."/>
            <person name="Langer I."/>
            <person name="Beck A."/>
            <person name="Lehrach H."/>
            <person name="Reinhardt R."/>
            <person name="Pohl T.M."/>
            <person name="Eger P."/>
            <person name="Zimmermann W."/>
            <person name="Wedler H."/>
            <person name="Wambutt R."/>
            <person name="Purnelle B."/>
            <person name="Goffeau A."/>
            <person name="Cadieu E."/>
            <person name="Dreano S."/>
            <person name="Gloux S."/>
            <person name="Lelaure V."/>
            <person name="Mottier S."/>
            <person name="Galibert F."/>
            <person name="Aves S.J."/>
            <person name="Xiang Z."/>
            <person name="Hunt C."/>
            <person name="Moore K."/>
            <person name="Hurst S.M."/>
            <person name="Lucas M."/>
            <person name="Rochet M."/>
            <person name="Gaillardin C."/>
            <person name="Tallada V.A."/>
            <person name="Garzon A."/>
            <person name="Thode G."/>
            <person name="Daga R.R."/>
            <person name="Cruzado L."/>
            <person name="Jimenez J."/>
            <person name="Sanchez M."/>
            <person name="del Rey F."/>
            <person name="Benito J."/>
            <person name="Dominguez A."/>
            <person name="Revuelta J.L."/>
            <person name="Moreno S."/>
            <person name="Armstrong J."/>
            <person name="Forsburg S.L."/>
            <person name="Cerutti L."/>
            <person name="Lowe T."/>
            <person name="McCombie W.R."/>
            <person name="Paulsen I."/>
            <person name="Potashkin J."/>
            <person name="Shpakovski G.V."/>
            <person name="Ussery D."/>
            <person name="Barrell B.G."/>
            <person name="Nurse P."/>
        </authorList>
    </citation>
    <scope>NUCLEOTIDE SEQUENCE [LARGE SCALE GENOMIC DNA]</scope>
    <source>
        <strain>972 / ATCC 24843</strain>
    </source>
</reference>
<reference key="5">
    <citation type="journal article" date="1997" name="DNA Res.">
        <title>Identification of open reading frames in Schizosaccharomyces pombe cDNAs.</title>
        <authorList>
            <person name="Yoshioka S."/>
            <person name="Kato K."/>
            <person name="Nakai K."/>
            <person name="Okayama H."/>
            <person name="Nojima H."/>
        </authorList>
    </citation>
    <scope>NUCLEOTIDE SEQUENCE [LARGE SCALE MRNA] OF 5-314</scope>
    <source>
        <strain>PR745</strain>
    </source>
</reference>
<reference key="6">
    <citation type="journal article" date="2000" name="Mol. Cell. Biol.">
        <title>Cpc2, a fission yeast homologue of mammalian RACK1 protein, interacts with Ran1 (Pat1) kinase to regulate cell cycle progression and meiotic development.</title>
        <authorList>
            <person name="McLeod M."/>
            <person name="Shor B."/>
            <person name="Caporaso A."/>
            <person name="Wang W."/>
            <person name="Chen H."/>
            <person name="Hu L."/>
        </authorList>
    </citation>
    <scope>FUNCTION</scope>
    <scope>INTERACTION WITH PAT1</scope>
</reference>
<reference key="7">
    <citation type="journal article" date="2008" name="J. Proteome Res.">
        <title>Phosphoproteome analysis of fission yeast.</title>
        <authorList>
            <person name="Wilson-Grady J.T."/>
            <person name="Villen J."/>
            <person name="Gygi S.P."/>
        </authorList>
    </citation>
    <scope>PHOSPHORYLATION [LARGE SCALE ANALYSIS] AT THR-10; SER-39; TYR-52; SER-148; SER-242 AND SER-255</scope>
    <scope>IDENTIFICATION BY MASS SPECTROMETRY</scope>
</reference>
<reference key="8">
    <citation type="journal article" date="2009" name="Mol. Biol. Cell">
        <title>Role for RACK1 orthologue Cpc2 in the modulation of stress response in fission yeast.</title>
        <authorList>
            <person name="Nunez A."/>
            <person name="Franco A."/>
            <person name="Madrid M."/>
            <person name="Soto T."/>
            <person name="Vicente J."/>
            <person name="Gacto M."/>
            <person name="Cansado J."/>
        </authorList>
    </citation>
    <scope>FUNCTION</scope>
</reference>
<sequence length="314" mass="34851">MPEQLVLRATLEGHSGWVTSLSTAPENPDILLSGSRDKSIILWNLVRDDVNYGVAQRRLTGHSHFVSDCALSFDSHYALSASWDKTIRLWDLEKGECTHQFVGHTSDVLSVSISPDNRQVVSGSRDKTIKIWNIIGNCKYTITDGGHSDWVSCVRFSPNPDNLTFVSAGWDKAVKVWDLETFSLRTSHYGHTGYVSAVTISPDGSLCASGGRDGTLMLWDLNESTHLYSLEAKANINALVFSPNRYWLCAATGSSIRIFDLETQEKVDELTVDFVGVGKKSSEPECISLTWSPDGQTLFSGWTDNLIRVWQVTK</sequence>
<evidence type="ECO:0000250" key="1">
    <source>
        <dbReference type="UniProtKB" id="P38011"/>
    </source>
</evidence>
<evidence type="ECO:0000269" key="2">
    <source>
    </source>
</evidence>
<evidence type="ECO:0000269" key="3">
    <source>
    </source>
</evidence>
<evidence type="ECO:0000269" key="4">
    <source>
    </source>
</evidence>
<evidence type="ECO:0000269" key="5">
    <source>
    </source>
</evidence>
<evidence type="ECO:0000303" key="6">
    <source>
    </source>
</evidence>
<evidence type="ECO:0000303" key="7">
    <source>
    </source>
</evidence>
<evidence type="ECO:0000305" key="8"/>
<accession>Q10281</accession>
<accession>P78896</accession>
<feature type="chain" id="PRO_0000127757" description="Small ribosomal subunit protein RACK1">
    <location>
        <begin position="1"/>
        <end position="314"/>
    </location>
</feature>
<feature type="repeat" description="WD 1">
    <location>
        <begin position="13"/>
        <end position="44"/>
    </location>
</feature>
<feature type="repeat" description="WD 2">
    <location>
        <begin position="61"/>
        <end position="91"/>
    </location>
</feature>
<feature type="repeat" description="WD 3">
    <location>
        <begin position="103"/>
        <end position="133"/>
    </location>
</feature>
<feature type="repeat" description="WD 4">
    <location>
        <begin position="146"/>
        <end position="178"/>
    </location>
</feature>
<feature type="repeat" description="WD 5">
    <location>
        <begin position="190"/>
        <end position="220"/>
    </location>
</feature>
<feature type="repeat" description="WD 6">
    <location>
        <begin position="231"/>
        <end position="260"/>
    </location>
</feature>
<feature type="repeat" description="WD 7">
    <location>
        <begin position="281"/>
        <end position="311"/>
    </location>
</feature>
<feature type="modified residue" description="Phosphothreonine" evidence="4">
    <location>
        <position position="10"/>
    </location>
</feature>
<feature type="modified residue" description="Phosphoserine" evidence="4">
    <location>
        <position position="39"/>
    </location>
</feature>
<feature type="modified residue" description="Phosphotyrosine" evidence="4">
    <location>
        <position position="52"/>
    </location>
</feature>
<feature type="modified residue" description="Phosphoserine" evidence="4">
    <location>
        <position position="148"/>
    </location>
</feature>
<feature type="modified residue" description="Phosphoserine" evidence="4">
    <location>
        <position position="242"/>
    </location>
</feature>
<feature type="modified residue" description="Phosphoserine" evidence="4">
    <location>
        <position position="255"/>
    </location>
</feature>
<feature type="sequence conflict" description="In Ref. 1; AAA56865 and 2; AAK38633." evidence="8" ref="1 2">
    <original>I</original>
    <variation>L</variation>
    <location>
        <position position="41"/>
    </location>
</feature>
<comment type="function">
    <text evidence="1 2 3 5">Component of the ribosome, a large ribonucleoprotein complex responsible for the synthesis of proteins in the cell. The small ribosomal subunit (SSU) binds messenger RNAs (mRNAs) and translates the encoded message by selecting cognate aminoacyl-transfer RNA (tRNA) molecules. The large subunit (LSU) contains the ribosomal catalytic site termed the peptidyl transferase center (PTC), which catalyzes the formation of peptide bonds, thereby polymerizing the amino acids delivered by tRNAs into a polypeptide chain. The nascent polypeptides leave the ribosome through a tunnel in the LSU and interact with protein factors that function in enzymatic processing, targeting, and the membrane insertion of nascent chains at the exit of the ribosomal tunnel. Located at the head of the 40S ribosomal subunit in the vicinity of the mRNA exit channel, RACK1 serves as a scaffold protein that can recruit other proteins to the ribosome. Involved in induction of the ribosome quality control (RQC) pathway; a pathway that degrades nascent peptide chains during problematic translation. Involved in the negative regulation of translation of a specific subset of proteins (By similarity). May be a receptor for protein kinase C in the regulation of actin cytoskeleton organization during cell wall synthesis and morphogenesis. Involved in the control of G2/M transition (PubMed:11263963). May function as an anchoring protein for pat1/ran1 kinase (PubMed:10805744). Negatively regulates the cell integrity transduction pathway by favoring translation of the tyrosine-phosphatases pyp1 and pyp2 that deactivate pmk1. Positively regulates the synthesis of the stress-responsive transcription factor Atf1 and the cytoplasmic catalase, a detoxificant enzyme induced by treatment with hydrogen peroxide (PubMed:19625445).</text>
</comment>
<comment type="subunit">
    <text evidence="1 2 3">Component of the small ribosomal subunit (SSU). Mature yeast ribosomes consist of a small (40S) and a large (60S) subunit. The 40S small subunit contains 1 molecule of ribosomal RNA (18S rRNA) and at least 33 different proteins. The large 60S subunit contains 3 rRNA molecules (25S, 5.8S and 5S rRNA) and at least 46 different proteins. RACK1 is located at the head of the SSU in the vicinity of the mRNA exit channel. RACK1 interacts with the mRNA-binding protein SCP16. RACK1 also exists simultaneously as a homodimer in a cytosolic non-ribosome-bound form (By similarity). Interacts with pck2 (PubMed:11263963). Interacts with pat1/ran1 (PubMed:10805744).</text>
</comment>
<comment type="interaction">
    <interactant intactId="EBI-696304">
        <id>Q10281</id>
    </interactant>
    <interactant intactId="EBI-2478405">
        <id>O13370</id>
        <label>ded1</label>
    </interactant>
    <organismsDiffer>false</organismsDiffer>
    <experiments>3</experiments>
</comment>
<comment type="interaction">
    <interactant intactId="EBI-696304">
        <id>Q10281</id>
    </interactant>
    <interactant intactId="EBI-696291">
        <id>Q09702</id>
        <label>nrd1</label>
    </interactant>
    <organismsDiffer>false</organismsDiffer>
    <experiments>4</experiments>
</comment>
<comment type="interaction">
    <interactant intactId="EBI-696304">
        <id>Q10281</id>
    </interactant>
    <interactant intactId="EBI-7169357">
        <id>P79015</id>
        <label>rpl3202</label>
    </interactant>
    <organismsDiffer>false</organismsDiffer>
    <experiments>2</experiments>
</comment>
<comment type="interaction">
    <interactant intactId="EBI-696304">
        <id>Q10281</id>
    </interactant>
    <interactant intactId="EBI-7169035">
        <id>Q09826</id>
        <label>sds23</label>
    </interactant>
    <organismsDiffer>false</organismsDiffer>
    <experiments>3</experiments>
</comment>
<comment type="subcellular location">
    <subcellularLocation>
        <location evidence="1">Cytoplasm</location>
    </subcellularLocation>
    <subcellularLocation>
        <location evidence="3">Membrane</location>
    </subcellularLocation>
    <text evidence="3">Associated with particulate fractions.</text>
</comment>
<comment type="similarity">
    <text evidence="8">Belongs to the WD repeat G protein beta family. Ribosomal protein RACK1 subfamily.</text>
</comment>
<dbReference type="EMBL" id="L37885">
    <property type="protein sequence ID" value="AAA56865.2"/>
    <property type="molecule type" value="mRNA"/>
</dbReference>
<dbReference type="EMBL" id="AF320333">
    <property type="protein sequence ID" value="AAK38633.1"/>
    <property type="molecule type" value="Genomic_DNA"/>
</dbReference>
<dbReference type="EMBL" id="CU329670">
    <property type="protein sequence ID" value="CAB11079.1"/>
    <property type="molecule type" value="Genomic_DNA"/>
</dbReference>
<dbReference type="EMBL" id="D89247">
    <property type="protein sequence ID" value="BAA13908.1"/>
    <property type="molecule type" value="mRNA"/>
</dbReference>
<dbReference type="PIR" id="T43158">
    <property type="entry name" value="T43158"/>
</dbReference>
<dbReference type="PIR" id="T43299">
    <property type="entry name" value="T43299"/>
</dbReference>
<dbReference type="RefSeq" id="NP_593770.1">
    <property type="nucleotide sequence ID" value="NM_001019200.2"/>
</dbReference>
<dbReference type="PDB" id="9AXV">
    <property type="method" value="EM"/>
    <property type="resolution" value="2.40 A"/>
    <property type="chains" value="Am=1-314"/>
</dbReference>
<dbReference type="PDBsum" id="9AXV"/>
<dbReference type="EMDB" id="EMD-43976"/>
<dbReference type="SMR" id="Q10281"/>
<dbReference type="BioGRID" id="279723">
    <property type="interactions" value="20"/>
</dbReference>
<dbReference type="FunCoup" id="Q10281">
    <property type="interactions" value="774"/>
</dbReference>
<dbReference type="IntAct" id="Q10281">
    <property type="interactions" value="6"/>
</dbReference>
<dbReference type="MINT" id="Q10281"/>
<dbReference type="STRING" id="284812.Q10281"/>
<dbReference type="iPTMnet" id="Q10281"/>
<dbReference type="PaxDb" id="4896-SPAC6B12.15.1"/>
<dbReference type="EnsemblFungi" id="SPAC6B12.15.1">
    <property type="protein sequence ID" value="SPAC6B12.15.1:pep"/>
    <property type="gene ID" value="SPAC6B12.15"/>
</dbReference>
<dbReference type="GeneID" id="2543298"/>
<dbReference type="KEGG" id="spo:2543298"/>
<dbReference type="PomBase" id="SPAC6B12.15">
    <property type="gene designation" value="cpc2"/>
</dbReference>
<dbReference type="VEuPathDB" id="FungiDB:SPAC6B12.15"/>
<dbReference type="eggNOG" id="KOG0279">
    <property type="taxonomic scope" value="Eukaryota"/>
</dbReference>
<dbReference type="HOGENOM" id="CLU_000288_57_7_1"/>
<dbReference type="InParanoid" id="Q10281"/>
<dbReference type="OMA" id="NCKLKIN"/>
<dbReference type="PhylomeDB" id="Q10281"/>
<dbReference type="PRO" id="PR:Q10281"/>
<dbReference type="Proteomes" id="UP000002485">
    <property type="component" value="Chromosome I"/>
</dbReference>
<dbReference type="GO" id="GO:0005737">
    <property type="term" value="C:cytoplasm"/>
    <property type="evidence" value="ECO:0000314"/>
    <property type="project" value="PomBase"/>
</dbReference>
<dbReference type="GO" id="GO:0005829">
    <property type="term" value="C:cytosol"/>
    <property type="evidence" value="ECO:0000318"/>
    <property type="project" value="GO_Central"/>
</dbReference>
<dbReference type="GO" id="GO:0005634">
    <property type="term" value="C:nucleus"/>
    <property type="evidence" value="ECO:0000318"/>
    <property type="project" value="GO_Central"/>
</dbReference>
<dbReference type="GO" id="GO:0005886">
    <property type="term" value="C:plasma membrane"/>
    <property type="evidence" value="ECO:0000269"/>
    <property type="project" value="PomBase"/>
</dbReference>
<dbReference type="GO" id="GO:1990904">
    <property type="term" value="C:ribonucleoprotein complex"/>
    <property type="evidence" value="ECO:0007669"/>
    <property type="project" value="UniProtKB-KW"/>
</dbReference>
<dbReference type="GO" id="GO:0005840">
    <property type="term" value="C:ribosome"/>
    <property type="evidence" value="ECO:0007669"/>
    <property type="project" value="UniProtKB-KW"/>
</dbReference>
<dbReference type="GO" id="GO:0005080">
    <property type="term" value="F:protein kinase C binding"/>
    <property type="evidence" value="ECO:0000318"/>
    <property type="project" value="GO_Central"/>
</dbReference>
<dbReference type="GO" id="GO:0043495">
    <property type="term" value="F:protein-membrane adaptor activity"/>
    <property type="evidence" value="ECO:0000314"/>
    <property type="project" value="PomBase"/>
</dbReference>
<dbReference type="GO" id="GO:0043024">
    <property type="term" value="F:ribosomal small subunit binding"/>
    <property type="evidence" value="ECO:0000269"/>
    <property type="project" value="PomBase"/>
</dbReference>
<dbReference type="GO" id="GO:0043022">
    <property type="term" value="F:ribosome binding"/>
    <property type="evidence" value="ECO:0000314"/>
    <property type="project" value="PomBase"/>
</dbReference>
<dbReference type="GO" id="GO:0030546">
    <property type="term" value="F:signaling receptor activator activity"/>
    <property type="evidence" value="ECO:0000353"/>
    <property type="project" value="PomBase"/>
</dbReference>
<dbReference type="GO" id="GO:0003735">
    <property type="term" value="F:structural constituent of ribosome"/>
    <property type="evidence" value="ECO:0000314"/>
    <property type="project" value="PomBase"/>
</dbReference>
<dbReference type="GO" id="GO:0008494">
    <property type="term" value="F:translation activator activity"/>
    <property type="evidence" value="ECO:0000269"/>
    <property type="project" value="PomBase"/>
</dbReference>
<dbReference type="GO" id="GO:0140469">
    <property type="term" value="P:GCN2-mediated signaling"/>
    <property type="evidence" value="ECO:0000315"/>
    <property type="project" value="PomBase"/>
</dbReference>
<dbReference type="GO" id="GO:1903138">
    <property type="term" value="P:negative regulation of cell integrity MAPK cascade"/>
    <property type="evidence" value="ECO:0000315"/>
    <property type="project" value="PomBase"/>
</dbReference>
<dbReference type="GO" id="GO:2000766">
    <property type="term" value="P:negative regulation of cytoplasmic translation"/>
    <property type="evidence" value="ECO:0000266"/>
    <property type="project" value="PomBase"/>
</dbReference>
<dbReference type="GO" id="GO:1903753">
    <property type="term" value="P:negative regulation of p38MAPK cascade"/>
    <property type="evidence" value="ECO:0000315"/>
    <property type="project" value="PomBase"/>
</dbReference>
<dbReference type="GO" id="GO:2001125">
    <property type="term" value="P:negative regulation of translational frameshifting"/>
    <property type="evidence" value="ECO:0000318"/>
    <property type="project" value="GO_Central"/>
</dbReference>
<dbReference type="GO" id="GO:0010508">
    <property type="term" value="P:positive regulation of autophagy"/>
    <property type="evidence" value="ECO:0000315"/>
    <property type="project" value="PomBase"/>
</dbReference>
<dbReference type="GO" id="GO:0031139">
    <property type="term" value="P:positive regulation of conjugation with cellular fusion"/>
    <property type="evidence" value="ECO:0000315"/>
    <property type="project" value="PomBase"/>
</dbReference>
<dbReference type="GO" id="GO:0032956">
    <property type="term" value="P:regulation of actin cytoskeleton organization"/>
    <property type="evidence" value="ECO:0000269"/>
    <property type="project" value="PomBase"/>
</dbReference>
<dbReference type="GO" id="GO:2000765">
    <property type="term" value="P:regulation of cytoplasmic translation"/>
    <property type="evidence" value="ECO:0000315"/>
    <property type="project" value="PomBase"/>
</dbReference>
<dbReference type="GO" id="GO:0072344">
    <property type="term" value="P:rescue of stalled ribosome"/>
    <property type="evidence" value="ECO:0000318"/>
    <property type="project" value="GO_Central"/>
</dbReference>
<dbReference type="GO" id="GO:0141014">
    <property type="term" value="P:ribosome hibernation"/>
    <property type="evidence" value="ECO:0000315"/>
    <property type="project" value="PomBase"/>
</dbReference>
<dbReference type="CDD" id="cd00200">
    <property type="entry name" value="WD40"/>
    <property type="match status" value="1"/>
</dbReference>
<dbReference type="FunFam" id="2.130.10.10:FF:000039">
    <property type="entry name" value="Guanine nucleotide-binding protein subunit beta-like protein"/>
    <property type="match status" value="1"/>
</dbReference>
<dbReference type="Gene3D" id="2.130.10.10">
    <property type="entry name" value="YVTN repeat-like/Quinoprotein amine dehydrogenase"/>
    <property type="match status" value="1"/>
</dbReference>
<dbReference type="InterPro" id="IPR020472">
    <property type="entry name" value="G-protein_beta_WD-40_rep"/>
</dbReference>
<dbReference type="InterPro" id="IPR045223">
    <property type="entry name" value="RACK1-like"/>
</dbReference>
<dbReference type="InterPro" id="IPR015943">
    <property type="entry name" value="WD40/YVTN_repeat-like_dom_sf"/>
</dbReference>
<dbReference type="InterPro" id="IPR019775">
    <property type="entry name" value="WD40_repeat_CS"/>
</dbReference>
<dbReference type="InterPro" id="IPR036322">
    <property type="entry name" value="WD40_repeat_dom_sf"/>
</dbReference>
<dbReference type="InterPro" id="IPR001680">
    <property type="entry name" value="WD40_rpt"/>
</dbReference>
<dbReference type="PANTHER" id="PTHR19868">
    <property type="entry name" value="RECEPTOR FOR ACTIVATED PROTEIN KINASE C RACK1"/>
    <property type="match status" value="1"/>
</dbReference>
<dbReference type="Pfam" id="PF00400">
    <property type="entry name" value="WD40"/>
    <property type="match status" value="7"/>
</dbReference>
<dbReference type="PRINTS" id="PR00320">
    <property type="entry name" value="GPROTEINBRPT"/>
</dbReference>
<dbReference type="SMART" id="SM00320">
    <property type="entry name" value="WD40"/>
    <property type="match status" value="7"/>
</dbReference>
<dbReference type="SUPFAM" id="SSF50978">
    <property type="entry name" value="WD40 repeat-like"/>
    <property type="match status" value="1"/>
</dbReference>
<dbReference type="PROSITE" id="PS00678">
    <property type="entry name" value="WD_REPEATS_1"/>
    <property type="match status" value="4"/>
</dbReference>
<dbReference type="PROSITE" id="PS50082">
    <property type="entry name" value="WD_REPEATS_2"/>
    <property type="match status" value="6"/>
</dbReference>
<dbReference type="PROSITE" id="PS50294">
    <property type="entry name" value="WD_REPEATS_REGION"/>
    <property type="match status" value="1"/>
</dbReference>
<gene>
    <name evidence="6" type="primary">cpc2</name>
    <name evidence="7" type="synonym">rkp1</name>
    <name type="ORF">SPAC6B12.15</name>
</gene>